<keyword id="KW-0963">Cytoplasm</keyword>
<keyword id="KW-0903">Direct protein sequencing</keyword>
<keyword id="KW-0349">Heme</keyword>
<keyword id="KW-0408">Iron</keyword>
<keyword id="KW-0479">Metal-binding</keyword>
<keyword id="KW-0514">Muscle protein</keyword>
<keyword id="KW-0560">Oxidoreductase</keyword>
<keyword id="KW-0561">Oxygen transport</keyword>
<keyword id="KW-0597">Phosphoprotein</keyword>
<keyword id="KW-1185">Reference proteome</keyword>
<keyword id="KW-0813">Transport</keyword>
<accession>P02196</accession>
<comment type="function">
    <text evidence="1">Monomeric heme protein which primary function is to store oxygen and facilitate its diffusion within muscle tissues. Reversibly binds oxygen through a pentacoordinated heme iron and enables its timely and efficient release as needed during periods of heightened demand. Depending on the oxidative conditions of tissues and cells, and in addition to its ability to bind oxygen, it also has a nitrite reductase activity whereby it regulates the production of bioactive nitric oxide. Under stress conditions, like hypoxia and anoxia, it also protects cells against reactive oxygen species thanks to its pseudoperoxidase activity.</text>
</comment>
<comment type="catalytic activity">
    <reaction evidence="1">
        <text>Fe(III)-heme b-[protein] + nitric oxide + H2O = Fe(II)-heme b-[protein] + nitrite + 2 H(+)</text>
        <dbReference type="Rhea" id="RHEA:77711"/>
        <dbReference type="Rhea" id="RHEA-COMP:18975"/>
        <dbReference type="Rhea" id="RHEA-COMP:18976"/>
        <dbReference type="ChEBI" id="CHEBI:15377"/>
        <dbReference type="ChEBI" id="CHEBI:15378"/>
        <dbReference type="ChEBI" id="CHEBI:16301"/>
        <dbReference type="ChEBI" id="CHEBI:16480"/>
        <dbReference type="ChEBI" id="CHEBI:55376"/>
        <dbReference type="ChEBI" id="CHEBI:60344"/>
    </reaction>
    <physiologicalReaction direction="right-to-left" evidence="1">
        <dbReference type="Rhea" id="RHEA:77713"/>
    </physiologicalReaction>
</comment>
<comment type="catalytic activity">
    <reaction evidence="1">
        <text>H2O2 + AH2 = A + 2 H2O</text>
        <dbReference type="Rhea" id="RHEA:30275"/>
        <dbReference type="ChEBI" id="CHEBI:13193"/>
        <dbReference type="ChEBI" id="CHEBI:15377"/>
        <dbReference type="ChEBI" id="CHEBI:16240"/>
        <dbReference type="ChEBI" id="CHEBI:17499"/>
    </reaction>
</comment>
<comment type="subunit">
    <text evidence="2">Monomeric.</text>
</comment>
<comment type="subcellular location">
    <subcellularLocation>
        <location evidence="1">Cytoplasm</location>
        <location evidence="1">Sarcoplasm</location>
    </subcellularLocation>
</comment>
<comment type="similarity">
    <text evidence="7">Belongs to the globin family.</text>
</comment>
<feature type="initiator methionine" description="Removed" evidence="8">
    <location>
        <position position="1"/>
    </location>
</feature>
<feature type="chain" id="PRO_0000053325" description="Myoglobin">
    <location>
        <begin position="2"/>
        <end position="154"/>
    </location>
</feature>
<feature type="domain" description="Globin" evidence="7">
    <location>
        <begin position="2"/>
        <end position="148"/>
    </location>
</feature>
<feature type="binding site" evidence="5">
    <location>
        <position position="65"/>
    </location>
    <ligand>
        <name>nitrite</name>
        <dbReference type="ChEBI" id="CHEBI:16301"/>
    </ligand>
</feature>
<feature type="binding site" evidence="3 7">
    <location>
        <position position="65"/>
    </location>
    <ligand>
        <name>O2</name>
        <dbReference type="ChEBI" id="CHEBI:15379"/>
    </ligand>
</feature>
<feature type="binding site" description="proximal binding residue" evidence="1">
    <location>
        <position position="94"/>
    </location>
    <ligand>
        <name>heme b</name>
        <dbReference type="ChEBI" id="CHEBI:60344"/>
    </ligand>
    <ligandPart>
        <name>Fe</name>
        <dbReference type="ChEBI" id="CHEBI:18248"/>
    </ligandPart>
</feature>
<feature type="modified residue" description="Phosphoserine" evidence="6">
    <location>
        <position position="4"/>
    </location>
</feature>
<feature type="modified residue" description="Phosphothreonine" evidence="4">
    <location>
        <position position="68"/>
    </location>
</feature>
<name>MYG_ORNAN</name>
<reference key="1">
    <citation type="journal article" date="1976" name="Aust. J. Biol. Sci.">
        <title>Studies on monotreme proteins. VII. Amino acid sequence of myoglobin from the platypus, Ornithoryhynchus anatinus.</title>
        <authorList>
            <person name="Fisher W.K."/>
            <person name="Thompson E.O.P."/>
        </authorList>
    </citation>
    <scope>PROTEIN SEQUENCE OF 2-154</scope>
</reference>
<proteinExistence type="evidence at protein level"/>
<sequence>MGLSDGEWQLVLKVWGKVEGDLPGHGQEVLIRLFKTHPETLEKFDKFKGLKTEDEMKASADLKKHGGTVLTALGNILKKKGQHEAELKPLAQSHATKHKISIKFLEYISEAIIHVLQSKHSADFGADAQAAMGKALELFRNDMAAKYKEFGFQG</sequence>
<protein>
    <recommendedName>
        <fullName>Myoglobin</fullName>
    </recommendedName>
    <alternativeName>
        <fullName evidence="1">Nitrite reductase MB</fullName>
        <ecNumber evidence="1">1.7.-.-</ecNumber>
    </alternativeName>
    <alternativeName>
        <fullName evidence="1">Pseudoperoxidase MB</fullName>
        <ecNumber evidence="1">1.11.1.-</ecNumber>
    </alternativeName>
</protein>
<evidence type="ECO:0000250" key="1">
    <source>
        <dbReference type="UniProtKB" id="P02144"/>
    </source>
</evidence>
<evidence type="ECO:0000250" key="2">
    <source>
        <dbReference type="UniProtKB" id="P02185"/>
    </source>
</evidence>
<evidence type="ECO:0000250" key="3">
    <source>
        <dbReference type="UniProtKB" id="P02189"/>
    </source>
</evidence>
<evidence type="ECO:0000250" key="4">
    <source>
        <dbReference type="UniProtKB" id="P04247"/>
    </source>
</evidence>
<evidence type="ECO:0000250" key="5">
    <source>
        <dbReference type="UniProtKB" id="P68082"/>
    </source>
</evidence>
<evidence type="ECO:0000250" key="6">
    <source>
        <dbReference type="UniProtKB" id="Q9QZ76"/>
    </source>
</evidence>
<evidence type="ECO:0000255" key="7">
    <source>
        <dbReference type="PROSITE-ProRule" id="PRU00238"/>
    </source>
</evidence>
<evidence type="ECO:0000269" key="8">
    <source>
    </source>
</evidence>
<organism>
    <name type="scientific">Ornithorhynchus anatinus</name>
    <name type="common">Duckbill platypus</name>
    <dbReference type="NCBI Taxonomy" id="9258"/>
    <lineage>
        <taxon>Eukaryota</taxon>
        <taxon>Metazoa</taxon>
        <taxon>Chordata</taxon>
        <taxon>Craniata</taxon>
        <taxon>Vertebrata</taxon>
        <taxon>Euteleostomi</taxon>
        <taxon>Mammalia</taxon>
        <taxon>Monotremata</taxon>
        <taxon>Ornithorhynchidae</taxon>
        <taxon>Ornithorhynchus</taxon>
    </lineage>
</organism>
<dbReference type="EC" id="1.7.-.-" evidence="1"/>
<dbReference type="EC" id="1.11.1.-" evidence="1"/>
<dbReference type="PIR" id="A02517">
    <property type="entry name" value="MYOR"/>
</dbReference>
<dbReference type="RefSeq" id="XP_001513113.1">
    <property type="nucleotide sequence ID" value="XM_001513063.4"/>
</dbReference>
<dbReference type="SMR" id="P02196"/>
<dbReference type="FunCoup" id="P02196">
    <property type="interactions" value="145"/>
</dbReference>
<dbReference type="STRING" id="9258.ENSOANP00000017227"/>
<dbReference type="Ensembl" id="ENSOANT00000017230.2">
    <property type="protein sequence ID" value="ENSOANP00000017227.1"/>
    <property type="gene ID" value="ENSOANG00000010874.2"/>
</dbReference>
<dbReference type="GeneID" id="100091341"/>
<dbReference type="KEGG" id="oaa:100091341"/>
<dbReference type="CTD" id="4151"/>
<dbReference type="eggNOG" id="KOG3378">
    <property type="taxonomic scope" value="Eukaryota"/>
</dbReference>
<dbReference type="GeneTree" id="ENSGT00940000160809"/>
<dbReference type="HOGENOM" id="CLU_003827_18_0_1"/>
<dbReference type="InParanoid" id="P02196"/>
<dbReference type="OMA" id="VIIRMFQ"/>
<dbReference type="OrthoDB" id="6344802at2759"/>
<dbReference type="TreeFam" id="TF332967"/>
<dbReference type="Proteomes" id="UP000002279">
    <property type="component" value="Chromosome 14"/>
</dbReference>
<dbReference type="Bgee" id="ENSOANG00000010874">
    <property type="expression patterns" value="Expressed in heart and 2 other cell types or tissues"/>
</dbReference>
<dbReference type="GO" id="GO:0016528">
    <property type="term" value="C:sarcoplasm"/>
    <property type="evidence" value="ECO:0000250"/>
    <property type="project" value="UniProtKB"/>
</dbReference>
<dbReference type="GO" id="GO:0020037">
    <property type="term" value="F:heme binding"/>
    <property type="evidence" value="ECO:0007669"/>
    <property type="project" value="InterPro"/>
</dbReference>
<dbReference type="GO" id="GO:0046872">
    <property type="term" value="F:metal ion binding"/>
    <property type="evidence" value="ECO:0007669"/>
    <property type="project" value="UniProtKB-KW"/>
</dbReference>
<dbReference type="GO" id="GO:0098809">
    <property type="term" value="F:nitrite reductase activity"/>
    <property type="evidence" value="ECO:0000250"/>
    <property type="project" value="UniProtKB"/>
</dbReference>
<dbReference type="GO" id="GO:0019825">
    <property type="term" value="F:oxygen binding"/>
    <property type="evidence" value="ECO:0000318"/>
    <property type="project" value="GO_Central"/>
</dbReference>
<dbReference type="GO" id="GO:0005344">
    <property type="term" value="F:oxygen carrier activity"/>
    <property type="evidence" value="ECO:0000250"/>
    <property type="project" value="UniProtKB"/>
</dbReference>
<dbReference type="GO" id="GO:0004601">
    <property type="term" value="F:peroxidase activity"/>
    <property type="evidence" value="ECO:0000250"/>
    <property type="project" value="UniProtKB"/>
</dbReference>
<dbReference type="GO" id="GO:0015671">
    <property type="term" value="P:oxygen transport"/>
    <property type="evidence" value="ECO:0000318"/>
    <property type="project" value="GO_Central"/>
</dbReference>
<dbReference type="GO" id="GO:0019430">
    <property type="term" value="P:removal of superoxide radicals"/>
    <property type="evidence" value="ECO:0000250"/>
    <property type="project" value="UniProtKB"/>
</dbReference>
<dbReference type="Gene3D" id="6.10.140.2100">
    <property type="match status" value="1"/>
</dbReference>
<dbReference type="Gene3D" id="6.10.140.2110">
    <property type="match status" value="1"/>
</dbReference>
<dbReference type="InterPro" id="IPR000971">
    <property type="entry name" value="Globin"/>
</dbReference>
<dbReference type="InterPro" id="IPR009050">
    <property type="entry name" value="Globin-like_sf"/>
</dbReference>
<dbReference type="InterPro" id="IPR002335">
    <property type="entry name" value="Myoglobin"/>
</dbReference>
<dbReference type="PANTHER" id="PTHR47132">
    <property type="entry name" value="MYOGLOBIN"/>
    <property type="match status" value="1"/>
</dbReference>
<dbReference type="PANTHER" id="PTHR47132:SF1">
    <property type="entry name" value="MYOGLOBIN"/>
    <property type="match status" value="1"/>
</dbReference>
<dbReference type="Pfam" id="PF00042">
    <property type="entry name" value="Globin"/>
    <property type="match status" value="1"/>
</dbReference>
<dbReference type="PRINTS" id="PR00613">
    <property type="entry name" value="MYOGLOBIN"/>
</dbReference>
<dbReference type="SUPFAM" id="SSF46458">
    <property type="entry name" value="Globin-like"/>
    <property type="match status" value="1"/>
</dbReference>
<dbReference type="PROSITE" id="PS01033">
    <property type="entry name" value="GLOBIN"/>
    <property type="match status" value="1"/>
</dbReference>
<gene>
    <name type="primary">MB</name>
</gene>